<organism>
    <name type="scientific">Yersinia pseudotuberculosis serotype IB (strain PB1/+)</name>
    <dbReference type="NCBI Taxonomy" id="502801"/>
    <lineage>
        <taxon>Bacteria</taxon>
        <taxon>Pseudomonadati</taxon>
        <taxon>Pseudomonadota</taxon>
        <taxon>Gammaproteobacteria</taxon>
        <taxon>Enterobacterales</taxon>
        <taxon>Yersiniaceae</taxon>
        <taxon>Yersinia</taxon>
    </lineage>
</organism>
<comment type="function">
    <text evidence="1">Bifunctional enzyme that catalyzes the enolization of 2,3-diketo-5-methylthiopentyl-1-phosphate (DK-MTP-1-P) into the intermediate 2-hydroxy-3-keto-5-methylthiopentenyl-1-phosphate (HK-MTPenyl-1-P), which is then dephosphorylated to form the acireductone 1,2-dihydroxy-3-keto-5-methylthiopentene (DHK-MTPene).</text>
</comment>
<comment type="catalytic activity">
    <reaction evidence="1">
        <text>5-methylsulfanyl-2,3-dioxopentyl phosphate + H2O = 1,2-dihydroxy-5-(methylsulfanyl)pent-1-en-3-one + phosphate</text>
        <dbReference type="Rhea" id="RHEA:21700"/>
        <dbReference type="ChEBI" id="CHEBI:15377"/>
        <dbReference type="ChEBI" id="CHEBI:43474"/>
        <dbReference type="ChEBI" id="CHEBI:49252"/>
        <dbReference type="ChEBI" id="CHEBI:58828"/>
        <dbReference type="EC" id="3.1.3.77"/>
    </reaction>
</comment>
<comment type="cofactor">
    <cofactor evidence="1">
        <name>Mg(2+)</name>
        <dbReference type="ChEBI" id="CHEBI:18420"/>
    </cofactor>
    <text evidence="1">Binds 1 Mg(2+) ion per subunit.</text>
</comment>
<comment type="pathway">
    <text evidence="1">Amino-acid biosynthesis; L-methionine biosynthesis via salvage pathway; L-methionine from S-methyl-5-thio-alpha-D-ribose 1-phosphate: step 3/6.</text>
</comment>
<comment type="pathway">
    <text evidence="1">Amino-acid biosynthesis; L-methionine biosynthesis via salvage pathway; L-methionine from S-methyl-5-thio-alpha-D-ribose 1-phosphate: step 4/6.</text>
</comment>
<comment type="subunit">
    <text evidence="1">Monomer.</text>
</comment>
<comment type="similarity">
    <text evidence="1">Belongs to the HAD-like hydrolase superfamily. MasA/MtnC family.</text>
</comment>
<proteinExistence type="inferred from homology"/>
<accession>B2K631</accession>
<name>MTNC_YERPB</name>
<gene>
    <name evidence="1" type="primary">mtnC</name>
    <name type="ordered locus">YPTS_0916</name>
</gene>
<evidence type="ECO:0000255" key="1">
    <source>
        <dbReference type="HAMAP-Rule" id="MF_01681"/>
    </source>
</evidence>
<keyword id="KW-0028">Amino-acid biosynthesis</keyword>
<keyword id="KW-0378">Hydrolase</keyword>
<keyword id="KW-0460">Magnesium</keyword>
<keyword id="KW-0479">Metal-binding</keyword>
<keyword id="KW-0486">Methionine biosynthesis</keyword>
<reference key="1">
    <citation type="submission" date="2008-04" db="EMBL/GenBank/DDBJ databases">
        <title>Complete sequence of Yersinia pseudotuberculosis PB1/+.</title>
        <authorList>
            <person name="Copeland A."/>
            <person name="Lucas S."/>
            <person name="Lapidus A."/>
            <person name="Glavina del Rio T."/>
            <person name="Dalin E."/>
            <person name="Tice H."/>
            <person name="Bruce D."/>
            <person name="Goodwin L."/>
            <person name="Pitluck S."/>
            <person name="Munk A.C."/>
            <person name="Brettin T."/>
            <person name="Detter J.C."/>
            <person name="Han C."/>
            <person name="Tapia R."/>
            <person name="Schmutz J."/>
            <person name="Larimer F."/>
            <person name="Land M."/>
            <person name="Hauser L."/>
            <person name="Challacombe J.F."/>
            <person name="Green L."/>
            <person name="Lindler L.E."/>
            <person name="Nikolich M.P."/>
            <person name="Richardson P."/>
        </authorList>
    </citation>
    <scope>NUCLEOTIDE SEQUENCE [LARGE SCALE GENOMIC DNA]</scope>
    <source>
        <strain>PB1/+</strain>
    </source>
</reference>
<feature type="chain" id="PRO_0000357443" description="Enolase-phosphatase E1">
    <location>
        <begin position="1"/>
        <end position="229"/>
    </location>
</feature>
<sequence>MIQAIVTDIEGTTTDIRFVHQVLFPYARERLTPFLRAHQQDDDITALLVDLRREIAQPDADIETLITVLHGFMDEDRKSTVLKAIQGIIWRTGYLQADFRGHVYPEVAQQLADWHQQGLKLYVYSSGSVAAQKLLFGYSDAGDLCPLFSGYFDTHVGAKRDVSAYQKIANQLGIAPQALLFLSDIRQELDAAQLAGWHTCQLIRDLPDNDSAHPQVNRFDQIVLSLFTE</sequence>
<dbReference type="EC" id="3.1.3.77" evidence="1"/>
<dbReference type="EMBL" id="CP001048">
    <property type="protein sequence ID" value="ACC87897.1"/>
    <property type="molecule type" value="Genomic_DNA"/>
</dbReference>
<dbReference type="RefSeq" id="WP_011191832.1">
    <property type="nucleotide sequence ID" value="NZ_CP009780.1"/>
</dbReference>
<dbReference type="SMR" id="B2K631"/>
<dbReference type="GeneID" id="49787071"/>
<dbReference type="KEGG" id="ypb:YPTS_0916"/>
<dbReference type="PATRIC" id="fig|502801.10.peg.249"/>
<dbReference type="UniPathway" id="UPA00904">
    <property type="reaction ID" value="UER00876"/>
</dbReference>
<dbReference type="UniPathway" id="UPA00904">
    <property type="reaction ID" value="UER00877"/>
</dbReference>
<dbReference type="GO" id="GO:0043715">
    <property type="term" value="F:2,3-diketo-5-methylthiopentyl-1-phosphate enolase activity"/>
    <property type="evidence" value="ECO:0007669"/>
    <property type="project" value="UniProtKB-UniRule"/>
</dbReference>
<dbReference type="GO" id="GO:0043716">
    <property type="term" value="F:2-hydroxy-3-keto-5-methylthiopentenyl-1-phosphate phosphatase activity"/>
    <property type="evidence" value="ECO:0007669"/>
    <property type="project" value="UniProtKB-UniRule"/>
</dbReference>
<dbReference type="GO" id="GO:0043874">
    <property type="term" value="F:acireductone synthase activity"/>
    <property type="evidence" value="ECO:0007669"/>
    <property type="project" value="UniProtKB-EC"/>
</dbReference>
<dbReference type="GO" id="GO:0000287">
    <property type="term" value="F:magnesium ion binding"/>
    <property type="evidence" value="ECO:0007669"/>
    <property type="project" value="UniProtKB-UniRule"/>
</dbReference>
<dbReference type="GO" id="GO:0019509">
    <property type="term" value="P:L-methionine salvage from methylthioadenosine"/>
    <property type="evidence" value="ECO:0007669"/>
    <property type="project" value="UniProtKB-UniRule"/>
</dbReference>
<dbReference type="CDD" id="cd01629">
    <property type="entry name" value="HAD_EP"/>
    <property type="match status" value="1"/>
</dbReference>
<dbReference type="Gene3D" id="1.10.720.60">
    <property type="match status" value="1"/>
</dbReference>
<dbReference type="Gene3D" id="3.40.50.1000">
    <property type="entry name" value="HAD superfamily/HAD-like"/>
    <property type="match status" value="1"/>
</dbReference>
<dbReference type="HAMAP" id="MF_01681">
    <property type="entry name" value="Salvage_MtnC"/>
    <property type="match status" value="1"/>
</dbReference>
<dbReference type="InterPro" id="IPR023943">
    <property type="entry name" value="Enolase-ppase_E1"/>
</dbReference>
<dbReference type="InterPro" id="IPR036412">
    <property type="entry name" value="HAD-like_sf"/>
</dbReference>
<dbReference type="InterPro" id="IPR006439">
    <property type="entry name" value="HAD-SF_hydro_IA"/>
</dbReference>
<dbReference type="InterPro" id="IPR023214">
    <property type="entry name" value="HAD_sf"/>
</dbReference>
<dbReference type="NCBIfam" id="TIGR01691">
    <property type="entry name" value="enolase-ppase"/>
    <property type="match status" value="1"/>
</dbReference>
<dbReference type="NCBIfam" id="TIGR01549">
    <property type="entry name" value="HAD-SF-IA-v1"/>
    <property type="match status" value="1"/>
</dbReference>
<dbReference type="PANTHER" id="PTHR20371">
    <property type="entry name" value="ENOLASE-PHOSPHATASE E1"/>
    <property type="match status" value="1"/>
</dbReference>
<dbReference type="PANTHER" id="PTHR20371:SF1">
    <property type="entry name" value="ENOLASE-PHOSPHATASE E1"/>
    <property type="match status" value="1"/>
</dbReference>
<dbReference type="Pfam" id="PF00702">
    <property type="entry name" value="Hydrolase"/>
    <property type="match status" value="1"/>
</dbReference>
<dbReference type="PRINTS" id="PR00413">
    <property type="entry name" value="HADHALOGNASE"/>
</dbReference>
<dbReference type="SFLD" id="SFLDF00044">
    <property type="entry name" value="enolase-phosphatase"/>
    <property type="match status" value="1"/>
</dbReference>
<dbReference type="SFLD" id="SFLDS00003">
    <property type="entry name" value="Haloacid_Dehalogenase"/>
    <property type="match status" value="1"/>
</dbReference>
<dbReference type="SUPFAM" id="SSF56784">
    <property type="entry name" value="HAD-like"/>
    <property type="match status" value="1"/>
</dbReference>
<protein>
    <recommendedName>
        <fullName evidence="1">Enolase-phosphatase E1</fullName>
        <ecNumber evidence="1">3.1.3.77</ecNumber>
    </recommendedName>
    <alternativeName>
        <fullName evidence="1">2,3-diketo-5-methylthio-1-phosphopentane phosphatase</fullName>
    </alternativeName>
</protein>